<keyword id="KW-0002">3D-structure</keyword>
<keyword id="KW-0009">Actin-binding</keyword>
<keyword id="KW-0963">Cytoplasm</keyword>
<keyword id="KW-0206">Cytoskeleton</keyword>
<keyword id="KW-0446">Lipid-binding</keyword>
<keyword id="KW-1185">Reference proteome</keyword>
<evidence type="ECO:0000250" key="1">
    <source>
        <dbReference type="UniProtKB" id="P07274"/>
    </source>
</evidence>
<evidence type="ECO:0000255" key="2"/>
<evidence type="ECO:0000269" key="3">
    <source>
    </source>
</evidence>
<evidence type="ECO:0000303" key="4">
    <source>
    </source>
</evidence>
<evidence type="ECO:0000305" key="5"/>
<evidence type="ECO:0007829" key="6">
    <source>
        <dbReference type="PDB" id="2JKF"/>
    </source>
</evidence>
<accession>P86294</accession>
<accession>A0A0L7KBZ5</accession>
<sequence>MAEEYSWDSYLNDRLLATNQVSGAGLASEEDGVVYACVAQGEESDPNFDKWSLFYKEDYDIEVEDENGTKTTKTINEGQTILVVFNEGYAPDGVWLGGTKYQFINIERDLEFEGYNFDVATCAKLKGGLHLVKVPGGNILVVLYDEEKEQDRGNSKIAALTFAKELAESSQ</sequence>
<name>PROF_PLAFX</name>
<reference evidence="5" key="1">
    <citation type="submission" date="2006-03" db="EMBL/GenBank/DDBJ databases">
        <title>The genome sequence of the Plasmodium falciparum HB3.</title>
        <authorList>
            <consortium name="The Broad Institute Genome Sequencing Platform"/>
            <person name="Birren B."/>
            <person name="Lander E."/>
            <person name="Galagan J."/>
            <person name="Nusbaum C."/>
            <person name="Devon K."/>
            <person name="Henn M."/>
            <person name="Jaffe D."/>
            <person name="Butler J."/>
            <person name="Alvarez P."/>
            <person name="Gnerre S."/>
            <person name="Grabherr M."/>
            <person name="Kleber M."/>
            <person name="Mauceli E."/>
            <person name="Brockman W."/>
            <person name="MacCallum I.A."/>
            <person name="Rounsley S."/>
            <person name="Young S."/>
            <person name="LaButti K."/>
            <person name="Pushparaj V."/>
            <person name="DeCaprio D."/>
            <person name="Crawford M."/>
            <person name="Koehrsen M."/>
            <person name="Engels R."/>
            <person name="Montgomery P."/>
            <person name="Pearson M."/>
            <person name="Howarth C."/>
            <person name="Larson L."/>
            <person name="Luoma S."/>
            <person name="White J."/>
            <person name="Kodira C."/>
            <person name="Zeng Q."/>
            <person name="Oleary S."/>
            <person name="Yandava C."/>
            <person name="Alvarado L."/>
            <person name="Wirth D."/>
            <person name="Volkman S."/>
            <person name="Hartl D."/>
        </authorList>
    </citation>
    <scope>NUCLEOTIDE SEQUENCE [LARGE SCALE GENOMIC DNA]</scope>
</reference>
<reference evidence="5" key="2">
    <citation type="journal article" date="2008" name="Structure">
        <title>Structural basis for parasite-specific functions of the divergent profilin of Plasmodium falciparum.</title>
        <authorList>
            <person name="Kursula I."/>
            <person name="Kursula P."/>
            <person name="Ganter M."/>
            <person name="Panjikar S."/>
            <person name="Matuschewski K."/>
            <person name="Schueler H."/>
        </authorList>
    </citation>
    <scope>X-RAY CRYSTALLOGRAPHY (1.89 ANGSTROMS) IN COMPLEX WITH OCTAPROLINE PEPTIDE</scope>
    <scope>FUNCTION</scope>
    <scope>ACTIN-BINDING</scope>
    <scope>PHOSPHOLIPID-BINDING</scope>
</reference>
<dbReference type="EMBL" id="CH671963">
    <property type="protein sequence ID" value="KOB60444.1"/>
    <property type="molecule type" value="Genomic_DNA"/>
</dbReference>
<dbReference type="PDB" id="2JKF">
    <property type="method" value="X-ray"/>
    <property type="resolution" value="2.31 A"/>
    <property type="chains" value="A=1-170"/>
</dbReference>
<dbReference type="PDB" id="2JKG">
    <property type="method" value="X-ray"/>
    <property type="resolution" value="1.89 A"/>
    <property type="chains" value="A=1-170"/>
</dbReference>
<dbReference type="PDB" id="4D60">
    <property type="method" value="X-ray"/>
    <property type="resolution" value="3.30 A"/>
    <property type="chains" value="A/B/C/D/E/F/G/H/I/J/K/L/M/N/O/P=1-170"/>
</dbReference>
<dbReference type="PDBsum" id="2JKF"/>
<dbReference type="PDBsum" id="2JKG"/>
<dbReference type="PDBsum" id="4D60"/>
<dbReference type="SMR" id="P86294"/>
<dbReference type="EnsemblProtists" id="KOB60444">
    <property type="protein sequence ID" value="KOB60444"/>
    <property type="gene ID" value="PFHG_02206"/>
</dbReference>
<dbReference type="KEGG" id="pfh:PFHG_02206"/>
<dbReference type="VEuPathDB" id="PlasmoDB:PfHB3_090037100"/>
<dbReference type="OMA" id="DKWTLFY"/>
<dbReference type="OrthoDB" id="246at418107"/>
<dbReference type="EvolutionaryTrace" id="P86294"/>
<dbReference type="Proteomes" id="UP000054289">
    <property type="component" value="Unassembled WGS sequence"/>
</dbReference>
<dbReference type="GO" id="GO:0015629">
    <property type="term" value="C:actin cytoskeleton"/>
    <property type="evidence" value="ECO:0000314"/>
    <property type="project" value="UniProtKB"/>
</dbReference>
<dbReference type="GO" id="GO:0005737">
    <property type="term" value="C:cytoplasm"/>
    <property type="evidence" value="ECO:0007669"/>
    <property type="project" value="UniProtKB-KW"/>
</dbReference>
<dbReference type="GO" id="GO:0003779">
    <property type="term" value="F:actin binding"/>
    <property type="evidence" value="ECO:0000353"/>
    <property type="project" value="UniProtKB"/>
</dbReference>
<dbReference type="GO" id="GO:0003785">
    <property type="term" value="F:actin monomer binding"/>
    <property type="evidence" value="ECO:0000315"/>
    <property type="project" value="UniProtKB"/>
</dbReference>
<dbReference type="GO" id="GO:0005543">
    <property type="term" value="F:phospholipid binding"/>
    <property type="evidence" value="ECO:0000315"/>
    <property type="project" value="UniProtKB"/>
</dbReference>
<dbReference type="GO" id="GO:0030036">
    <property type="term" value="P:actin cytoskeleton organization"/>
    <property type="evidence" value="ECO:0000315"/>
    <property type="project" value="UniProtKB"/>
</dbReference>
<dbReference type="GO" id="GO:0060327">
    <property type="term" value="P:cytoplasmic actin-based contraction involved in cell motility"/>
    <property type="evidence" value="ECO:0000315"/>
    <property type="project" value="UniProtKB"/>
</dbReference>
<dbReference type="FunFam" id="3.30.450.30:FF:000016">
    <property type="entry name" value="Profilin"/>
    <property type="match status" value="1"/>
</dbReference>
<dbReference type="Gene3D" id="3.30.450.30">
    <property type="entry name" value="Dynein light chain 2a, cytoplasmic"/>
    <property type="match status" value="1"/>
</dbReference>
<dbReference type="InterPro" id="IPR048278">
    <property type="entry name" value="PFN"/>
</dbReference>
<dbReference type="InterPro" id="IPR005455">
    <property type="entry name" value="PFN_euk"/>
</dbReference>
<dbReference type="InterPro" id="IPR036140">
    <property type="entry name" value="PFN_sf"/>
</dbReference>
<dbReference type="InterPro" id="IPR016814">
    <property type="entry name" value="Profilin_apicomplexa"/>
</dbReference>
<dbReference type="Pfam" id="PF00235">
    <property type="entry name" value="Profilin"/>
    <property type="match status" value="1"/>
</dbReference>
<dbReference type="PIRSF" id="PIRSF022993">
    <property type="entry name" value="Profilin_apicomplexa"/>
    <property type="match status" value="1"/>
</dbReference>
<dbReference type="SMART" id="SM00392">
    <property type="entry name" value="PROF"/>
    <property type="match status" value="1"/>
</dbReference>
<dbReference type="SUPFAM" id="SSF55770">
    <property type="entry name" value="Profilin (actin-binding protein)"/>
    <property type="match status" value="1"/>
</dbReference>
<feature type="chain" id="PRO_0000377710" description="Profilin">
    <location>
        <begin position="1"/>
        <end position="171"/>
    </location>
</feature>
<feature type="region of interest" description="Pro-rich sequence-binding" evidence="3">
    <location>
        <begin position="5"/>
        <end position="10"/>
    </location>
</feature>
<feature type="region of interest" description="Actin-binding" evidence="2 4">
    <location>
        <begin position="100"/>
        <end position="112"/>
    </location>
</feature>
<feature type="region of interest" description="Actin-binding" evidence="2 4">
    <location>
        <begin position="152"/>
        <end position="156"/>
    </location>
</feature>
<feature type="short sequence motif" description="Plasmodium-specific profilin mini-domain" evidence="3">
    <location>
        <begin position="48"/>
        <end position="54"/>
    </location>
</feature>
<feature type="site" description="Interaction with Pro-rich sequence">
    <location>
        <position position="35"/>
    </location>
</feature>
<feature type="site" description="Interaction with actin" evidence="2">
    <location>
        <position position="89"/>
    </location>
</feature>
<feature type="helix" evidence="6">
    <location>
        <begin position="7"/>
        <end position="14"/>
    </location>
</feature>
<feature type="helix" evidence="6">
    <location>
        <begin position="16"/>
        <end position="18"/>
    </location>
</feature>
<feature type="strand" evidence="6">
    <location>
        <begin position="22"/>
        <end position="28"/>
    </location>
</feature>
<feature type="turn" evidence="6">
    <location>
        <begin position="29"/>
        <end position="31"/>
    </location>
</feature>
<feature type="strand" evidence="6">
    <location>
        <begin position="34"/>
        <end position="40"/>
    </location>
</feature>
<feature type="strand" evidence="6">
    <location>
        <begin position="42"/>
        <end position="44"/>
    </location>
</feature>
<feature type="helix" evidence="6">
    <location>
        <begin position="50"/>
        <end position="53"/>
    </location>
</feature>
<feature type="strand" evidence="6">
    <location>
        <begin position="59"/>
        <end position="64"/>
    </location>
</feature>
<feature type="strand" evidence="6">
    <location>
        <begin position="70"/>
        <end position="75"/>
    </location>
</feature>
<feature type="helix" evidence="6">
    <location>
        <begin position="77"/>
        <end position="86"/>
    </location>
</feature>
<feature type="strand" evidence="6">
    <location>
        <begin position="94"/>
        <end position="96"/>
    </location>
</feature>
<feature type="strand" evidence="6">
    <location>
        <begin position="99"/>
        <end position="112"/>
    </location>
</feature>
<feature type="strand" evidence="6">
    <location>
        <begin position="115"/>
        <end position="124"/>
    </location>
</feature>
<feature type="strand" evidence="6">
    <location>
        <begin position="127"/>
        <end position="134"/>
    </location>
</feature>
<feature type="turn" evidence="6">
    <location>
        <begin position="135"/>
        <end position="137"/>
    </location>
</feature>
<feature type="strand" evidence="6">
    <location>
        <begin position="138"/>
        <end position="145"/>
    </location>
</feature>
<feature type="helix" evidence="6">
    <location>
        <begin position="146"/>
        <end position="148"/>
    </location>
</feature>
<feature type="helix" evidence="6">
    <location>
        <begin position="152"/>
        <end position="169"/>
    </location>
</feature>
<comment type="function">
    <text evidence="3">Essential for the invasive blood stages of the parasite. Binds to proline rich sequences in various regulatory formin-like proteins and also to membrane phospholipids. Binds to actin and affects the structure of the cytoskeleton. Weakly sequesters actin monomers.</text>
</comment>
<comment type="subunit">
    <text evidence="3">Binds actin.</text>
</comment>
<comment type="subcellular location">
    <subcellularLocation>
        <location evidence="1">Cytoplasm</location>
        <location evidence="1">Cytoskeleton</location>
    </subcellularLocation>
</comment>
<comment type="domain">
    <text>The actin binding residues are poorly conserved between Plasmodium and other organisms. The Plasmodium-specific profilin mini-domain may have a role in binding to membrane phospholipids.</text>
</comment>
<comment type="similarity">
    <text evidence="2">Belongs to the profilin family.</text>
</comment>
<proteinExistence type="evidence at protein level"/>
<organism>
    <name type="scientific">Plasmodium falciparum (isolate HB3)</name>
    <dbReference type="NCBI Taxonomy" id="137071"/>
    <lineage>
        <taxon>Eukaryota</taxon>
        <taxon>Sar</taxon>
        <taxon>Alveolata</taxon>
        <taxon>Apicomplexa</taxon>
        <taxon>Aconoidasida</taxon>
        <taxon>Haemosporida</taxon>
        <taxon>Plasmodiidae</taxon>
        <taxon>Plasmodium</taxon>
        <taxon>Plasmodium (Laverania)</taxon>
    </lineage>
</organism>
<gene>
    <name type="ORF">PFHG_02206</name>
</gene>
<protein>
    <recommendedName>
        <fullName evidence="4">Profilin</fullName>
        <shortName evidence="4">PfPfn</shortName>
    </recommendedName>
</protein>